<reference key="1">
    <citation type="journal article" date="2003" name="Nucleic Acids Res.">
        <title>Complete chloroplast DNA sequence of the moss Physcomitrella patens: evidence for the loss and relocation of rpoA from the chloroplast to the nucleus.</title>
        <authorList>
            <person name="Sugiura C."/>
            <person name="Kobayashi Y."/>
            <person name="Setsuyuki A."/>
            <person name="Sugita C."/>
            <person name="Sugita M."/>
        </authorList>
    </citation>
    <scope>NUCLEOTIDE SEQUENCE [LARGE SCALE GENOMIC DNA]</scope>
    <source>
        <strain>cv. Gransden 2004</strain>
    </source>
</reference>
<accession>Q6YXR5</accession>
<comment type="function">
    <text evidence="2">Component of the cytochrome b6-f complex, which mediates electron transfer between photosystem II (PSII) and photosystem I (PSI), cyclic electron flow around PSI, and state transitions.</text>
</comment>
<comment type="subunit">
    <text evidence="1">The 4 large subunits of the cytochrome b6-f complex are cytochrome b6, subunit IV (17 kDa polypeptide, petD), cytochrome f and the Rieske protein, while the 4 small subunits are petG, petL, petM and petN. The complex functions as a dimer (By similarity).</text>
</comment>
<comment type="subcellular location">
    <subcellularLocation>
        <location evidence="2">Plastid</location>
        <location evidence="2">Chloroplast thylakoid membrane</location>
        <topology evidence="2">Multi-pass membrane protein</topology>
    </subcellularLocation>
</comment>
<comment type="similarity">
    <text evidence="2">Belongs to the cytochrome b family. PetD subfamily.</text>
</comment>
<gene>
    <name evidence="2" type="primary">petD</name>
</gene>
<protein>
    <recommendedName>
        <fullName evidence="2">Cytochrome b6-f complex subunit 4</fullName>
    </recommendedName>
    <alternativeName>
        <fullName evidence="2">17 kDa polypeptide</fullName>
    </alternativeName>
</protein>
<geneLocation type="chloroplast"/>
<feature type="chain" id="PRO_0000061881" description="Cytochrome b6-f complex subunit 4">
    <location>
        <begin position="1"/>
        <end position="160"/>
    </location>
</feature>
<feature type="transmembrane region" description="Helical" evidence="2">
    <location>
        <begin position="36"/>
        <end position="56"/>
    </location>
</feature>
<feature type="transmembrane region" description="Helical" evidence="2">
    <location>
        <begin position="95"/>
        <end position="115"/>
    </location>
</feature>
<feature type="transmembrane region" description="Helical" evidence="2">
    <location>
        <begin position="131"/>
        <end position="151"/>
    </location>
</feature>
<dbReference type="EMBL" id="AP005672">
    <property type="protein sequence ID" value="BAC85019.1"/>
    <property type="molecule type" value="Genomic_DNA"/>
</dbReference>
<dbReference type="RefSeq" id="NP_904170.1">
    <property type="nucleotide sequence ID" value="NC_005087.2"/>
</dbReference>
<dbReference type="RefSeq" id="YP_009477501.1">
    <property type="nucleotide sequence ID" value="NC_037465.1"/>
</dbReference>
<dbReference type="SMR" id="Q6YXR5"/>
<dbReference type="FunCoup" id="Q6YXR5">
    <property type="interactions" value="474"/>
</dbReference>
<dbReference type="STRING" id="3218.Q6YXR5"/>
<dbReference type="PaxDb" id="3218-PP1S27_268V6.1"/>
<dbReference type="GeneID" id="2546703"/>
<dbReference type="GeneID" id="36487114"/>
<dbReference type="KEGG" id="ppp:2546703"/>
<dbReference type="eggNOG" id="KOG4663">
    <property type="taxonomic scope" value="Eukaryota"/>
</dbReference>
<dbReference type="HOGENOM" id="CLU_112652_1_0_1"/>
<dbReference type="InParanoid" id="Q6YXR5"/>
<dbReference type="OrthoDB" id="244at2759"/>
<dbReference type="Proteomes" id="UP000006727">
    <property type="component" value="Chloroplast"/>
</dbReference>
<dbReference type="GO" id="GO:0009535">
    <property type="term" value="C:chloroplast thylakoid membrane"/>
    <property type="evidence" value="ECO:0007669"/>
    <property type="project" value="UniProtKB-SubCell"/>
</dbReference>
<dbReference type="GO" id="GO:0045158">
    <property type="term" value="F:electron transporter, transferring electrons within cytochrome b6/f complex of photosystem II activity"/>
    <property type="evidence" value="ECO:0007669"/>
    <property type="project" value="UniProtKB-UniRule"/>
</dbReference>
<dbReference type="GO" id="GO:0045156">
    <property type="term" value="F:electron transporter, transferring electrons within the cyclic electron transport pathway of photosynthesis activity"/>
    <property type="evidence" value="ECO:0007669"/>
    <property type="project" value="InterPro"/>
</dbReference>
<dbReference type="GO" id="GO:0016491">
    <property type="term" value="F:oxidoreductase activity"/>
    <property type="evidence" value="ECO:0007669"/>
    <property type="project" value="InterPro"/>
</dbReference>
<dbReference type="GO" id="GO:0009767">
    <property type="term" value="P:photosynthetic electron transport chain"/>
    <property type="evidence" value="ECO:0007669"/>
    <property type="project" value="InterPro"/>
</dbReference>
<dbReference type="CDD" id="cd00290">
    <property type="entry name" value="cytochrome_b_C"/>
    <property type="match status" value="1"/>
</dbReference>
<dbReference type="FunFam" id="1.10.287.980:FF:000001">
    <property type="entry name" value="Cytochrome b6-f complex subunit 4"/>
    <property type="match status" value="1"/>
</dbReference>
<dbReference type="FunFam" id="1.20.5.510:FF:000002">
    <property type="entry name" value="Cytochrome b6-f complex subunit 4"/>
    <property type="match status" value="1"/>
</dbReference>
<dbReference type="Gene3D" id="1.10.287.980">
    <property type="entry name" value="plastocyanin oxidoreductase"/>
    <property type="match status" value="1"/>
</dbReference>
<dbReference type="Gene3D" id="1.20.5.510">
    <property type="entry name" value="Single helix bin"/>
    <property type="match status" value="1"/>
</dbReference>
<dbReference type="HAMAP" id="MF_01344">
    <property type="entry name" value="Cytb6_f_subIV"/>
    <property type="match status" value="1"/>
</dbReference>
<dbReference type="InterPro" id="IPR005798">
    <property type="entry name" value="Cyt_b/b6_C"/>
</dbReference>
<dbReference type="InterPro" id="IPR036150">
    <property type="entry name" value="Cyt_b/b6_C_sf"/>
</dbReference>
<dbReference type="InterPro" id="IPR005870">
    <property type="entry name" value="Cyt_b6/f_cplx_suIV"/>
</dbReference>
<dbReference type="InterPro" id="IPR048260">
    <property type="entry name" value="Cytochrome_b_C_euk/bac"/>
</dbReference>
<dbReference type="NCBIfam" id="TIGR01156">
    <property type="entry name" value="cytb6_f_IV"/>
    <property type="match status" value="1"/>
</dbReference>
<dbReference type="PANTHER" id="PTHR19271">
    <property type="entry name" value="CYTOCHROME B"/>
    <property type="match status" value="1"/>
</dbReference>
<dbReference type="PANTHER" id="PTHR19271:SF41">
    <property type="entry name" value="CYTOCHROME B_B6 C-TERMINAL REGION PROFILE DOMAIN-CONTAINING PROTEIN"/>
    <property type="match status" value="1"/>
</dbReference>
<dbReference type="Pfam" id="PF00032">
    <property type="entry name" value="Cytochrom_B_C"/>
    <property type="match status" value="1"/>
</dbReference>
<dbReference type="PIRSF" id="PIRSF000033">
    <property type="entry name" value="B6f_17K"/>
    <property type="match status" value="1"/>
</dbReference>
<dbReference type="SUPFAM" id="SSF81648">
    <property type="entry name" value="a domain/subunit of cytochrome bc1 complex (Ubiquinol-cytochrome c reductase)"/>
    <property type="match status" value="1"/>
</dbReference>
<dbReference type="PROSITE" id="PS51003">
    <property type="entry name" value="CYTB_CTER"/>
    <property type="match status" value="1"/>
</dbReference>
<sequence>MGVTKKPDLSDPVLRAKLAKGMGHNYYGEPAWPNDLLYIFPVVILGTIACTVGLAVLEPSMIGEPANPFATPLEILPEWYFFPVFQILRTVPNKLLGVLLMAAVPAGLLTVPFLENVNKFQNPFRRPVATTVFLIGTVVSIWLGIGAALPIDISLTLGLF</sequence>
<proteinExistence type="inferred from homology"/>
<organism>
    <name type="scientific">Physcomitrium patens</name>
    <name type="common">Spreading-leaved earth moss</name>
    <name type="synonym">Physcomitrella patens</name>
    <dbReference type="NCBI Taxonomy" id="3218"/>
    <lineage>
        <taxon>Eukaryota</taxon>
        <taxon>Viridiplantae</taxon>
        <taxon>Streptophyta</taxon>
        <taxon>Embryophyta</taxon>
        <taxon>Bryophyta</taxon>
        <taxon>Bryophytina</taxon>
        <taxon>Bryopsida</taxon>
        <taxon>Funariidae</taxon>
        <taxon>Funariales</taxon>
        <taxon>Funariaceae</taxon>
        <taxon>Physcomitrium</taxon>
    </lineage>
</organism>
<evidence type="ECO:0000250" key="1"/>
<evidence type="ECO:0000255" key="2">
    <source>
        <dbReference type="HAMAP-Rule" id="MF_01344"/>
    </source>
</evidence>
<name>PETD_PHYPA</name>
<keyword id="KW-0150">Chloroplast</keyword>
<keyword id="KW-0249">Electron transport</keyword>
<keyword id="KW-0472">Membrane</keyword>
<keyword id="KW-0602">Photosynthesis</keyword>
<keyword id="KW-0934">Plastid</keyword>
<keyword id="KW-1185">Reference proteome</keyword>
<keyword id="KW-0793">Thylakoid</keyword>
<keyword id="KW-0812">Transmembrane</keyword>
<keyword id="KW-1133">Transmembrane helix</keyword>
<keyword id="KW-0813">Transport</keyword>